<gene>
    <name type="ordered locus">At1g49140</name>
    <name type="ORF">F27J15.9</name>
</gene>
<reference key="1">
    <citation type="journal article" date="2000" name="Nature">
        <title>Sequence and analysis of chromosome 1 of the plant Arabidopsis thaliana.</title>
        <authorList>
            <person name="Theologis A."/>
            <person name="Ecker J.R."/>
            <person name="Palm C.J."/>
            <person name="Federspiel N.A."/>
            <person name="Kaul S."/>
            <person name="White O."/>
            <person name="Alonso J."/>
            <person name="Altafi H."/>
            <person name="Araujo R."/>
            <person name="Bowman C.L."/>
            <person name="Brooks S.Y."/>
            <person name="Buehler E."/>
            <person name="Chan A."/>
            <person name="Chao Q."/>
            <person name="Chen H."/>
            <person name="Cheuk R.F."/>
            <person name="Chin C.W."/>
            <person name="Chung M.K."/>
            <person name="Conn L."/>
            <person name="Conway A.B."/>
            <person name="Conway A.R."/>
            <person name="Creasy T.H."/>
            <person name="Dewar K."/>
            <person name="Dunn P."/>
            <person name="Etgu P."/>
            <person name="Feldblyum T.V."/>
            <person name="Feng J.-D."/>
            <person name="Fong B."/>
            <person name="Fujii C.Y."/>
            <person name="Gill J.E."/>
            <person name="Goldsmith A.D."/>
            <person name="Haas B."/>
            <person name="Hansen N.F."/>
            <person name="Hughes B."/>
            <person name="Huizar L."/>
            <person name="Hunter J.L."/>
            <person name="Jenkins J."/>
            <person name="Johnson-Hopson C."/>
            <person name="Khan S."/>
            <person name="Khaykin E."/>
            <person name="Kim C.J."/>
            <person name="Koo H.L."/>
            <person name="Kremenetskaia I."/>
            <person name="Kurtz D.B."/>
            <person name="Kwan A."/>
            <person name="Lam B."/>
            <person name="Langin-Hooper S."/>
            <person name="Lee A."/>
            <person name="Lee J.M."/>
            <person name="Lenz C.A."/>
            <person name="Li J.H."/>
            <person name="Li Y.-P."/>
            <person name="Lin X."/>
            <person name="Liu S.X."/>
            <person name="Liu Z.A."/>
            <person name="Luros J.S."/>
            <person name="Maiti R."/>
            <person name="Marziali A."/>
            <person name="Militscher J."/>
            <person name="Miranda M."/>
            <person name="Nguyen M."/>
            <person name="Nierman W.C."/>
            <person name="Osborne B.I."/>
            <person name="Pai G."/>
            <person name="Peterson J."/>
            <person name="Pham P.K."/>
            <person name="Rizzo M."/>
            <person name="Rooney T."/>
            <person name="Rowley D."/>
            <person name="Sakano H."/>
            <person name="Salzberg S.L."/>
            <person name="Schwartz J.R."/>
            <person name="Shinn P."/>
            <person name="Southwick A.M."/>
            <person name="Sun H."/>
            <person name="Tallon L.J."/>
            <person name="Tambunga G."/>
            <person name="Toriumi M.J."/>
            <person name="Town C.D."/>
            <person name="Utterback T."/>
            <person name="Van Aken S."/>
            <person name="Vaysberg M."/>
            <person name="Vysotskaia V.S."/>
            <person name="Walker M."/>
            <person name="Wu D."/>
            <person name="Yu G."/>
            <person name="Fraser C.M."/>
            <person name="Venter J.C."/>
            <person name="Davis R.W."/>
        </authorList>
    </citation>
    <scope>NUCLEOTIDE SEQUENCE [LARGE SCALE GENOMIC DNA]</scope>
    <source>
        <strain>cv. Columbia</strain>
    </source>
</reference>
<reference key="2">
    <citation type="journal article" date="2017" name="Plant J.">
        <title>Araport11: a complete reannotation of the Arabidopsis thaliana reference genome.</title>
        <authorList>
            <person name="Cheng C.Y."/>
            <person name="Krishnakumar V."/>
            <person name="Chan A.P."/>
            <person name="Thibaud-Nissen F."/>
            <person name="Schobel S."/>
            <person name="Town C.D."/>
        </authorList>
    </citation>
    <scope>GENOME REANNOTATION</scope>
    <source>
        <strain>cv. Columbia</strain>
    </source>
</reference>
<reference key="3">
    <citation type="journal article" date="2003" name="Science">
        <title>Empirical analysis of transcriptional activity in the Arabidopsis genome.</title>
        <authorList>
            <person name="Yamada K."/>
            <person name="Lim J."/>
            <person name="Dale J.M."/>
            <person name="Chen H."/>
            <person name="Shinn P."/>
            <person name="Palm C.J."/>
            <person name="Southwick A.M."/>
            <person name="Wu H.C."/>
            <person name="Kim C.J."/>
            <person name="Nguyen M."/>
            <person name="Pham P.K."/>
            <person name="Cheuk R.F."/>
            <person name="Karlin-Newmann G."/>
            <person name="Liu S.X."/>
            <person name="Lam B."/>
            <person name="Sakano H."/>
            <person name="Wu T."/>
            <person name="Yu G."/>
            <person name="Miranda M."/>
            <person name="Quach H.L."/>
            <person name="Tripp M."/>
            <person name="Chang C.H."/>
            <person name="Lee J.M."/>
            <person name="Toriumi M.J."/>
            <person name="Chan M.M."/>
            <person name="Tang C.C."/>
            <person name="Onodera C.S."/>
            <person name="Deng J.M."/>
            <person name="Akiyama K."/>
            <person name="Ansari Y."/>
            <person name="Arakawa T."/>
            <person name="Banh J."/>
            <person name="Banno F."/>
            <person name="Bowser L."/>
            <person name="Brooks S.Y."/>
            <person name="Carninci P."/>
            <person name="Chao Q."/>
            <person name="Choy N."/>
            <person name="Enju A."/>
            <person name="Goldsmith A.D."/>
            <person name="Gurjal M."/>
            <person name="Hansen N.F."/>
            <person name="Hayashizaki Y."/>
            <person name="Johnson-Hopson C."/>
            <person name="Hsuan V.W."/>
            <person name="Iida K."/>
            <person name="Karnes M."/>
            <person name="Khan S."/>
            <person name="Koesema E."/>
            <person name="Ishida J."/>
            <person name="Jiang P.X."/>
            <person name="Jones T."/>
            <person name="Kawai J."/>
            <person name="Kamiya A."/>
            <person name="Meyers C."/>
            <person name="Nakajima M."/>
            <person name="Narusaka M."/>
            <person name="Seki M."/>
            <person name="Sakurai T."/>
            <person name="Satou M."/>
            <person name="Tamse R."/>
            <person name="Vaysberg M."/>
            <person name="Wallender E.K."/>
            <person name="Wong C."/>
            <person name="Yamamura Y."/>
            <person name="Yuan S."/>
            <person name="Shinozaki K."/>
            <person name="Davis R.W."/>
            <person name="Theologis A."/>
            <person name="Ecker J.R."/>
        </authorList>
    </citation>
    <scope>NUCLEOTIDE SEQUENCE [LARGE SCALE MRNA]</scope>
    <source>
        <strain>cv. Columbia</strain>
    </source>
</reference>
<reference key="4">
    <citation type="submission" date="2002-11" db="EMBL/GenBank/DDBJ databases">
        <title>Large-scale analysis of RIKEN Arabidopsis full-length (RAFL) cDNAs.</title>
        <authorList>
            <person name="Totoki Y."/>
            <person name="Seki M."/>
            <person name="Ishida J."/>
            <person name="Nakajima M."/>
            <person name="Enju A."/>
            <person name="Kamiya A."/>
            <person name="Narusaka M."/>
            <person name="Shin-i T."/>
            <person name="Nakagawa M."/>
            <person name="Sakamoto N."/>
            <person name="Oishi K."/>
            <person name="Kohara Y."/>
            <person name="Kobayashi M."/>
            <person name="Toyoda A."/>
            <person name="Sakaki Y."/>
            <person name="Sakurai T."/>
            <person name="Iida K."/>
            <person name="Akiyama K."/>
            <person name="Satou M."/>
            <person name="Toyoda T."/>
            <person name="Konagaya A."/>
            <person name="Carninci P."/>
            <person name="Kawai J."/>
            <person name="Hayashizaki Y."/>
            <person name="Shinozaki K."/>
        </authorList>
    </citation>
    <scope>NUCLEOTIDE SEQUENCE [LARGE SCALE MRNA]</scope>
    <source>
        <strain>cv. Columbia</strain>
    </source>
</reference>
<reference key="5">
    <citation type="submission" date="2002-03" db="EMBL/GenBank/DDBJ databases">
        <title>Full-length cDNA from Arabidopsis thaliana.</title>
        <authorList>
            <person name="Brover V.V."/>
            <person name="Troukhan M.E."/>
            <person name="Alexandrov N.A."/>
            <person name="Lu Y.-P."/>
            <person name="Flavell R.B."/>
            <person name="Feldmann K.A."/>
        </authorList>
    </citation>
    <scope>NUCLEOTIDE SEQUENCE [LARGE SCALE MRNA]</scope>
</reference>
<organism>
    <name type="scientific">Arabidopsis thaliana</name>
    <name type="common">Mouse-ear cress</name>
    <dbReference type="NCBI Taxonomy" id="3702"/>
    <lineage>
        <taxon>Eukaryota</taxon>
        <taxon>Viridiplantae</taxon>
        <taxon>Streptophyta</taxon>
        <taxon>Embryophyta</taxon>
        <taxon>Tracheophyta</taxon>
        <taxon>Spermatophyta</taxon>
        <taxon>Magnoliopsida</taxon>
        <taxon>eudicotyledons</taxon>
        <taxon>Gunneridae</taxon>
        <taxon>Pentapetalae</taxon>
        <taxon>rosids</taxon>
        <taxon>malvids</taxon>
        <taxon>Brassicales</taxon>
        <taxon>Brassicaceae</taxon>
        <taxon>Camelineae</taxon>
        <taxon>Arabidopsis</taxon>
    </lineage>
</organism>
<proteinExistence type="evidence at protein level"/>
<accession>Q9M9B4</accession>
<dbReference type="EMBL" id="AC016041">
    <property type="protein sequence ID" value="AAF69699.1"/>
    <property type="molecule type" value="Genomic_DNA"/>
</dbReference>
<dbReference type="EMBL" id="CP002684">
    <property type="protein sequence ID" value="AEE32395.1"/>
    <property type="molecule type" value="Genomic_DNA"/>
</dbReference>
<dbReference type="EMBL" id="CP002684">
    <property type="protein sequence ID" value="ANM58929.1"/>
    <property type="molecule type" value="Genomic_DNA"/>
</dbReference>
<dbReference type="EMBL" id="BT004697">
    <property type="protein sequence ID" value="AAO42943.1"/>
    <property type="molecule type" value="mRNA"/>
</dbReference>
<dbReference type="EMBL" id="AK118515">
    <property type="protein sequence ID" value="BAC43118.1"/>
    <property type="molecule type" value="mRNA"/>
</dbReference>
<dbReference type="EMBL" id="AY084789">
    <property type="protein sequence ID" value="AAM61356.1"/>
    <property type="molecule type" value="mRNA"/>
</dbReference>
<dbReference type="RefSeq" id="NP_001321329.1">
    <property type="nucleotide sequence ID" value="NM_001333366.1"/>
</dbReference>
<dbReference type="RefSeq" id="NP_564540.1">
    <property type="nucleotide sequence ID" value="NM_103804.4"/>
</dbReference>
<dbReference type="PDB" id="7A23">
    <property type="method" value="EM"/>
    <property type="resolution" value="3.70 A"/>
    <property type="chains" value="f=1-107"/>
</dbReference>
<dbReference type="PDBsum" id="7A23"/>
<dbReference type="SMR" id="Q9M9B4"/>
<dbReference type="BioGRID" id="26562">
    <property type="interactions" value="1"/>
</dbReference>
<dbReference type="FunCoup" id="Q9M9B4">
    <property type="interactions" value="169"/>
</dbReference>
<dbReference type="IntAct" id="Q9M9B4">
    <property type="interactions" value="3"/>
</dbReference>
<dbReference type="STRING" id="3702.Q9M9B4"/>
<dbReference type="PaxDb" id="3702-AT1G49140.1"/>
<dbReference type="ProteomicsDB" id="251203"/>
<dbReference type="EnsemblPlants" id="AT1G49140.1">
    <property type="protein sequence ID" value="AT1G49140.1"/>
    <property type="gene ID" value="AT1G49140"/>
</dbReference>
<dbReference type="EnsemblPlants" id="AT1G49140.2">
    <property type="protein sequence ID" value="AT1G49140.2"/>
    <property type="gene ID" value="AT1G49140"/>
</dbReference>
<dbReference type="GeneID" id="841337"/>
<dbReference type="Gramene" id="AT1G49140.1">
    <property type="protein sequence ID" value="AT1G49140.1"/>
    <property type="gene ID" value="AT1G49140"/>
</dbReference>
<dbReference type="Gramene" id="AT1G49140.2">
    <property type="protein sequence ID" value="AT1G49140.2"/>
    <property type="gene ID" value="AT1G49140"/>
</dbReference>
<dbReference type="KEGG" id="ath:AT1G49140"/>
<dbReference type="Araport" id="AT1G49140"/>
<dbReference type="TAIR" id="AT1G49140"/>
<dbReference type="eggNOG" id="KOG4009">
    <property type="taxonomic scope" value="Eukaryota"/>
</dbReference>
<dbReference type="HOGENOM" id="CLU_145724_0_0_1"/>
<dbReference type="InParanoid" id="Q9M9B4"/>
<dbReference type="OMA" id="LPRICLP"/>
<dbReference type="OrthoDB" id="1021446at2759"/>
<dbReference type="PhylomeDB" id="Q9M9B4"/>
<dbReference type="BioCyc" id="ARA:AT1G49140-MONOMER"/>
<dbReference type="BioCyc" id="MetaCyc:AT1G49140-MONOMER"/>
<dbReference type="PRO" id="PR:Q9M9B4"/>
<dbReference type="Proteomes" id="UP000006548">
    <property type="component" value="Chromosome 1"/>
</dbReference>
<dbReference type="ExpressionAtlas" id="Q9M9B4">
    <property type="expression patterns" value="baseline and differential"/>
</dbReference>
<dbReference type="GO" id="GO:0005743">
    <property type="term" value="C:mitochondrial inner membrane"/>
    <property type="evidence" value="ECO:0007669"/>
    <property type="project" value="UniProtKB-SubCell"/>
</dbReference>
<dbReference type="GO" id="GO:0031966">
    <property type="term" value="C:mitochondrial membrane"/>
    <property type="evidence" value="ECO:0000314"/>
    <property type="project" value="TAIR"/>
</dbReference>
<dbReference type="GO" id="GO:0005739">
    <property type="term" value="C:mitochondrion"/>
    <property type="evidence" value="ECO:0000314"/>
    <property type="project" value="TAIR"/>
</dbReference>
<dbReference type="GO" id="GO:0045271">
    <property type="term" value="C:respiratory chain complex I"/>
    <property type="evidence" value="ECO:0000314"/>
    <property type="project" value="TAIR"/>
</dbReference>
<dbReference type="GO" id="GO:0009853">
    <property type="term" value="P:photorespiration"/>
    <property type="evidence" value="ECO:0000304"/>
    <property type="project" value="TAIR"/>
</dbReference>
<dbReference type="InterPro" id="IPR019377">
    <property type="entry name" value="NADH_UbQ_OxRdtase_su10"/>
</dbReference>
<dbReference type="InterPro" id="IPR039993">
    <property type="entry name" value="NDUFB10"/>
</dbReference>
<dbReference type="PANTHER" id="PTHR13094:SF1">
    <property type="entry name" value="NADH DEHYDROGENASE [UBIQUINONE] 1 BETA SUBCOMPLEX SUBUNIT 10"/>
    <property type="match status" value="1"/>
</dbReference>
<dbReference type="PANTHER" id="PTHR13094">
    <property type="entry name" value="NADH-UBIQUINONE OXIDOREDUCTASE PDSW SUBUNIT"/>
    <property type="match status" value="1"/>
</dbReference>
<dbReference type="Pfam" id="PF10249">
    <property type="entry name" value="NDUFB10"/>
    <property type="match status" value="1"/>
</dbReference>
<protein>
    <recommendedName>
        <fullName>NADH dehydrogenase [ubiquinone] 1 beta subcomplex subunit 10-A</fullName>
    </recommendedName>
</protein>
<sequence length="107" mass="12530">MGRKKGLPEFEESAPDGFDPENPYKDPVAMVEMREHIVREKWIHIEKAKILREKVKWCYRVEGVNHYQKCRHLVQQYLDATRGVGWGKDHRPISLHGPKPVAVEEAE</sequence>
<feature type="chain" id="PRO_0000251871" description="NADH dehydrogenase [ubiquinone] 1 beta subcomplex subunit 10-A">
    <location>
        <begin position="1"/>
        <end position="107"/>
    </location>
</feature>
<feature type="region of interest" description="Disordered" evidence="2">
    <location>
        <begin position="1"/>
        <end position="23"/>
    </location>
</feature>
<evidence type="ECO:0000250" key="1"/>
<evidence type="ECO:0000256" key="2">
    <source>
        <dbReference type="SAM" id="MobiDB-lite"/>
    </source>
</evidence>
<evidence type="ECO:0000305" key="3"/>
<keyword id="KW-0002">3D-structure</keyword>
<keyword id="KW-0249">Electron transport</keyword>
<keyword id="KW-0472">Membrane</keyword>
<keyword id="KW-0496">Mitochondrion</keyword>
<keyword id="KW-0999">Mitochondrion inner membrane</keyword>
<keyword id="KW-1185">Reference proteome</keyword>
<keyword id="KW-0679">Respiratory chain</keyword>
<keyword id="KW-0813">Transport</keyword>
<name>NDBAA_ARATH</name>
<comment type="function">
    <text evidence="1">Accessory subunit of the mitochondrial membrane respiratory chain NADH dehydrogenase (Complex I), that is believed not to be involved in catalysis. Complex I functions in the transfer of electrons from NADH to the respiratory chain. The immediate electron acceptor for the enzyme is believed to be ubiquinone (By similarity).</text>
</comment>
<comment type="subunit">
    <text>Complex I is composed of at least 49 different subunits.</text>
</comment>
<comment type="subcellular location">
    <subcellularLocation>
        <location evidence="1">Mitochondrion inner membrane</location>
        <topology evidence="1">Peripheral membrane protein</topology>
        <orientation evidence="1">Matrix side</orientation>
    </subcellularLocation>
</comment>
<comment type="similarity">
    <text evidence="3">Belongs to the complex I NDUFB10 subunit family.</text>
</comment>